<name>ROGF1_ARATH</name>
<organism>
    <name type="scientific">Arabidopsis thaliana</name>
    <name type="common">Mouse-ear cress</name>
    <dbReference type="NCBI Taxonomy" id="3702"/>
    <lineage>
        <taxon>Eukaryota</taxon>
        <taxon>Viridiplantae</taxon>
        <taxon>Streptophyta</taxon>
        <taxon>Embryophyta</taxon>
        <taxon>Tracheophyta</taxon>
        <taxon>Spermatophyta</taxon>
        <taxon>Magnoliopsida</taxon>
        <taxon>eudicotyledons</taxon>
        <taxon>Gunneridae</taxon>
        <taxon>Pentapetalae</taxon>
        <taxon>rosids</taxon>
        <taxon>malvids</taxon>
        <taxon>Brassicales</taxon>
        <taxon>Brassicaceae</taxon>
        <taxon>Camelineae</taxon>
        <taxon>Arabidopsis</taxon>
    </lineage>
</organism>
<gene>
    <name type="primary">ROPGEF1</name>
    <name type="ordered locus">At4g38430</name>
    <name type="ORF">F22I13.200</name>
</gene>
<reference key="1">
    <citation type="journal article" date="1999" name="Nature">
        <title>Sequence and analysis of chromosome 4 of the plant Arabidopsis thaliana.</title>
        <authorList>
            <person name="Mayer K.F.X."/>
            <person name="Schueller C."/>
            <person name="Wambutt R."/>
            <person name="Murphy G."/>
            <person name="Volckaert G."/>
            <person name="Pohl T."/>
            <person name="Duesterhoeft A."/>
            <person name="Stiekema W."/>
            <person name="Entian K.-D."/>
            <person name="Terryn N."/>
            <person name="Harris B."/>
            <person name="Ansorge W."/>
            <person name="Brandt P."/>
            <person name="Grivell L.A."/>
            <person name="Rieger M."/>
            <person name="Weichselgartner M."/>
            <person name="de Simone V."/>
            <person name="Obermaier B."/>
            <person name="Mache R."/>
            <person name="Mueller M."/>
            <person name="Kreis M."/>
            <person name="Delseny M."/>
            <person name="Puigdomenech P."/>
            <person name="Watson M."/>
            <person name="Schmidtheini T."/>
            <person name="Reichert B."/>
            <person name="Portetelle D."/>
            <person name="Perez-Alonso M."/>
            <person name="Boutry M."/>
            <person name="Bancroft I."/>
            <person name="Vos P."/>
            <person name="Hoheisel J."/>
            <person name="Zimmermann W."/>
            <person name="Wedler H."/>
            <person name="Ridley P."/>
            <person name="Langham S.-A."/>
            <person name="McCullagh B."/>
            <person name="Bilham L."/>
            <person name="Robben J."/>
            <person name="van der Schueren J."/>
            <person name="Grymonprez B."/>
            <person name="Chuang Y.-J."/>
            <person name="Vandenbussche F."/>
            <person name="Braeken M."/>
            <person name="Weltjens I."/>
            <person name="Voet M."/>
            <person name="Bastiaens I."/>
            <person name="Aert R."/>
            <person name="Defoor E."/>
            <person name="Weitzenegger T."/>
            <person name="Bothe G."/>
            <person name="Ramsperger U."/>
            <person name="Hilbert H."/>
            <person name="Braun M."/>
            <person name="Holzer E."/>
            <person name="Brandt A."/>
            <person name="Peters S."/>
            <person name="van Staveren M."/>
            <person name="Dirkse W."/>
            <person name="Mooijman P."/>
            <person name="Klein Lankhorst R."/>
            <person name="Rose M."/>
            <person name="Hauf J."/>
            <person name="Koetter P."/>
            <person name="Berneiser S."/>
            <person name="Hempel S."/>
            <person name="Feldpausch M."/>
            <person name="Lamberth S."/>
            <person name="Van den Daele H."/>
            <person name="De Keyser A."/>
            <person name="Buysshaert C."/>
            <person name="Gielen J."/>
            <person name="Villarroel R."/>
            <person name="De Clercq R."/>
            <person name="van Montagu M."/>
            <person name="Rogers J."/>
            <person name="Cronin A."/>
            <person name="Quail M.A."/>
            <person name="Bray-Allen S."/>
            <person name="Clark L."/>
            <person name="Doggett J."/>
            <person name="Hall S."/>
            <person name="Kay M."/>
            <person name="Lennard N."/>
            <person name="McLay K."/>
            <person name="Mayes R."/>
            <person name="Pettett A."/>
            <person name="Rajandream M.A."/>
            <person name="Lyne M."/>
            <person name="Benes V."/>
            <person name="Rechmann S."/>
            <person name="Borkova D."/>
            <person name="Bloecker H."/>
            <person name="Scharfe M."/>
            <person name="Grimm M."/>
            <person name="Loehnert T.-H."/>
            <person name="Dose S."/>
            <person name="de Haan M."/>
            <person name="Maarse A.C."/>
            <person name="Schaefer M."/>
            <person name="Mueller-Auer S."/>
            <person name="Gabel C."/>
            <person name="Fuchs M."/>
            <person name="Fartmann B."/>
            <person name="Granderath K."/>
            <person name="Dauner D."/>
            <person name="Herzl A."/>
            <person name="Neumann S."/>
            <person name="Argiriou A."/>
            <person name="Vitale D."/>
            <person name="Liguori R."/>
            <person name="Piravandi E."/>
            <person name="Massenet O."/>
            <person name="Quigley F."/>
            <person name="Clabauld G."/>
            <person name="Muendlein A."/>
            <person name="Felber R."/>
            <person name="Schnabl S."/>
            <person name="Hiller R."/>
            <person name="Schmidt W."/>
            <person name="Lecharny A."/>
            <person name="Aubourg S."/>
            <person name="Chefdor F."/>
            <person name="Cooke R."/>
            <person name="Berger C."/>
            <person name="Monfort A."/>
            <person name="Casacuberta E."/>
            <person name="Gibbons T."/>
            <person name="Weber N."/>
            <person name="Vandenbol M."/>
            <person name="Bargues M."/>
            <person name="Terol J."/>
            <person name="Torres A."/>
            <person name="Perez-Perez A."/>
            <person name="Purnelle B."/>
            <person name="Bent E."/>
            <person name="Johnson S."/>
            <person name="Tacon D."/>
            <person name="Jesse T."/>
            <person name="Heijnen L."/>
            <person name="Schwarz S."/>
            <person name="Scholler P."/>
            <person name="Heber S."/>
            <person name="Francs P."/>
            <person name="Bielke C."/>
            <person name="Frishman D."/>
            <person name="Haase D."/>
            <person name="Lemcke K."/>
            <person name="Mewes H.-W."/>
            <person name="Stocker S."/>
            <person name="Zaccaria P."/>
            <person name="Bevan M."/>
            <person name="Wilson R.K."/>
            <person name="de la Bastide M."/>
            <person name="Habermann K."/>
            <person name="Parnell L."/>
            <person name="Dedhia N."/>
            <person name="Gnoj L."/>
            <person name="Schutz K."/>
            <person name="Huang E."/>
            <person name="Spiegel L."/>
            <person name="Sekhon M."/>
            <person name="Murray J."/>
            <person name="Sheet P."/>
            <person name="Cordes M."/>
            <person name="Abu-Threideh J."/>
            <person name="Stoneking T."/>
            <person name="Kalicki J."/>
            <person name="Graves T."/>
            <person name="Harmon G."/>
            <person name="Edwards J."/>
            <person name="Latreille P."/>
            <person name="Courtney L."/>
            <person name="Cloud J."/>
            <person name="Abbott A."/>
            <person name="Scott K."/>
            <person name="Johnson D."/>
            <person name="Minx P."/>
            <person name="Bentley D."/>
            <person name="Fulton B."/>
            <person name="Miller N."/>
            <person name="Greco T."/>
            <person name="Kemp K."/>
            <person name="Kramer J."/>
            <person name="Fulton L."/>
            <person name="Mardis E."/>
            <person name="Dante M."/>
            <person name="Pepin K."/>
            <person name="Hillier L.W."/>
            <person name="Nelson J."/>
            <person name="Spieth J."/>
            <person name="Ryan E."/>
            <person name="Andrews S."/>
            <person name="Geisel C."/>
            <person name="Layman D."/>
            <person name="Du H."/>
            <person name="Ali J."/>
            <person name="Berghoff A."/>
            <person name="Jones K."/>
            <person name="Drone K."/>
            <person name="Cotton M."/>
            <person name="Joshu C."/>
            <person name="Antonoiu B."/>
            <person name="Zidanic M."/>
            <person name="Strong C."/>
            <person name="Sun H."/>
            <person name="Lamar B."/>
            <person name="Yordan C."/>
            <person name="Ma P."/>
            <person name="Zhong J."/>
            <person name="Preston R."/>
            <person name="Vil D."/>
            <person name="Shekher M."/>
            <person name="Matero A."/>
            <person name="Shah R."/>
            <person name="Swaby I.K."/>
            <person name="O'Shaughnessy A."/>
            <person name="Rodriguez M."/>
            <person name="Hoffman J."/>
            <person name="Till S."/>
            <person name="Granat S."/>
            <person name="Shohdy N."/>
            <person name="Hasegawa A."/>
            <person name="Hameed A."/>
            <person name="Lodhi M."/>
            <person name="Johnson A."/>
            <person name="Chen E."/>
            <person name="Marra M.A."/>
            <person name="Martienssen R."/>
            <person name="McCombie W.R."/>
        </authorList>
    </citation>
    <scope>NUCLEOTIDE SEQUENCE [LARGE SCALE GENOMIC DNA]</scope>
    <source>
        <strain>cv. Columbia</strain>
    </source>
</reference>
<reference key="2">
    <citation type="journal article" date="2017" name="Plant J.">
        <title>Araport11: a complete reannotation of the Arabidopsis thaliana reference genome.</title>
        <authorList>
            <person name="Cheng C.Y."/>
            <person name="Krishnakumar V."/>
            <person name="Chan A.P."/>
            <person name="Thibaud-Nissen F."/>
            <person name="Schobel S."/>
            <person name="Town C.D."/>
        </authorList>
    </citation>
    <scope>GENOME REANNOTATION</scope>
    <source>
        <strain>cv. Columbia</strain>
    </source>
</reference>
<reference key="3">
    <citation type="journal article" date="2003" name="Science">
        <title>Empirical analysis of transcriptional activity in the Arabidopsis genome.</title>
        <authorList>
            <person name="Yamada K."/>
            <person name="Lim J."/>
            <person name="Dale J.M."/>
            <person name="Chen H."/>
            <person name="Shinn P."/>
            <person name="Palm C.J."/>
            <person name="Southwick A.M."/>
            <person name="Wu H.C."/>
            <person name="Kim C.J."/>
            <person name="Nguyen M."/>
            <person name="Pham P.K."/>
            <person name="Cheuk R.F."/>
            <person name="Karlin-Newmann G."/>
            <person name="Liu S.X."/>
            <person name="Lam B."/>
            <person name="Sakano H."/>
            <person name="Wu T."/>
            <person name="Yu G."/>
            <person name="Miranda M."/>
            <person name="Quach H.L."/>
            <person name="Tripp M."/>
            <person name="Chang C.H."/>
            <person name="Lee J.M."/>
            <person name="Toriumi M.J."/>
            <person name="Chan M.M."/>
            <person name="Tang C.C."/>
            <person name="Onodera C.S."/>
            <person name="Deng J.M."/>
            <person name="Akiyama K."/>
            <person name="Ansari Y."/>
            <person name="Arakawa T."/>
            <person name="Banh J."/>
            <person name="Banno F."/>
            <person name="Bowser L."/>
            <person name="Brooks S.Y."/>
            <person name="Carninci P."/>
            <person name="Chao Q."/>
            <person name="Choy N."/>
            <person name="Enju A."/>
            <person name="Goldsmith A.D."/>
            <person name="Gurjal M."/>
            <person name="Hansen N.F."/>
            <person name="Hayashizaki Y."/>
            <person name="Johnson-Hopson C."/>
            <person name="Hsuan V.W."/>
            <person name="Iida K."/>
            <person name="Karnes M."/>
            <person name="Khan S."/>
            <person name="Koesema E."/>
            <person name="Ishida J."/>
            <person name="Jiang P.X."/>
            <person name="Jones T."/>
            <person name="Kawai J."/>
            <person name="Kamiya A."/>
            <person name="Meyers C."/>
            <person name="Nakajima M."/>
            <person name="Narusaka M."/>
            <person name="Seki M."/>
            <person name="Sakurai T."/>
            <person name="Satou M."/>
            <person name="Tamse R."/>
            <person name="Vaysberg M."/>
            <person name="Wallender E.K."/>
            <person name="Wong C."/>
            <person name="Yamamura Y."/>
            <person name="Yuan S."/>
            <person name="Shinozaki K."/>
            <person name="Davis R.W."/>
            <person name="Theologis A."/>
            <person name="Ecker J.R."/>
        </authorList>
    </citation>
    <scope>NUCLEOTIDE SEQUENCE [LARGE SCALE MRNA]</scope>
    <source>
        <strain>cv. Columbia</strain>
    </source>
</reference>
<reference key="4">
    <citation type="submission" date="2002-03" db="EMBL/GenBank/DDBJ databases">
        <title>Full-length cDNA from Arabidopsis thaliana.</title>
        <authorList>
            <person name="Brover V.V."/>
            <person name="Troukhan M.E."/>
            <person name="Alexandrov N.A."/>
            <person name="Lu Y.-P."/>
            <person name="Flavell R.B."/>
            <person name="Feldmann K.A."/>
        </authorList>
    </citation>
    <scope>NUCLEOTIDE SEQUENCE [LARGE SCALE MRNA]</scope>
</reference>
<reference key="5">
    <citation type="journal article" date="2005" name="Nature">
        <title>A new family of RhoGEFs activates the Rop molecular switch in plants.</title>
        <authorList>
            <person name="Berken A."/>
            <person name="Thomas C."/>
            <person name="Wittinghofer A."/>
        </authorList>
    </citation>
    <scope>FUNCTION</scope>
    <scope>DOMAIN</scope>
    <scope>GENE FAMILY</scope>
</reference>
<reference key="6">
    <citation type="journal article" date="2006" name="Plant Cell">
        <title>Members of a novel class of Arabidopsis Rho guanine nucleotide exchange factors control Rho GTPase-dependent polar growth.</title>
        <authorList>
            <person name="Gu Y."/>
            <person name="Li S."/>
            <person name="Lord E.M."/>
            <person name="Yang Z."/>
        </authorList>
    </citation>
    <scope>FUNCTION</scope>
    <scope>INTERACTION WITH ARAC11/ROP1</scope>
    <scope>SUBCELLULAR LOCATION</scope>
    <scope>TISSUE SPECIFICITY</scope>
</reference>
<reference key="7">
    <citation type="journal article" date="2010" name="Proc. Natl. Acad. Sci. U.S.A.">
        <title>FERONIA receptor-like kinase regulates RHO GTPase signaling of root hair development.</title>
        <authorList>
            <person name="Duan Q."/>
            <person name="Kita D."/>
            <person name="Li C."/>
            <person name="Cheung A.Y."/>
            <person name="Wu H.M."/>
        </authorList>
    </citation>
    <scope>INTERACTION WITH FER</scope>
</reference>
<reference key="8">
    <citation type="journal article" date="2012" name="FEBS Lett.">
        <title>ROPGEF1 and ROPGEF4 are functional regulators of ROP11 GTPase in ABA-mediated stomatal closure in Arabidopsis.</title>
        <authorList>
            <person name="Li Z."/>
            <person name="Liu D."/>
        </authorList>
    </citation>
    <scope>FUNCTION</scope>
    <scope>INTERACTION WITH ARAC10/ROP11</scope>
    <scope>SUBCELLULAR LOCATION</scope>
    <scope>TISSUE SPECIFICITY</scope>
    <scope>DISRUPTION PHENOTYPE</scope>
</reference>
<reference key="9">
    <citation type="journal article" date="2013" name="Mol. Plant">
        <title>AtPRK2 Promotes ROP1 activation via RopGEFs in the control of polarized pollen tube growth.</title>
        <authorList>
            <person name="Chang F."/>
            <person name="Gu Y."/>
            <person name="Ma H."/>
            <person name="Yang Z."/>
        </authorList>
    </citation>
    <scope>FUNCTION</scope>
    <scope>ACTIVITY REGULATION</scope>
    <scope>INTERACTION WITH ARAC11/ROP1; PRK1; PRK2; PRK3 AND PRK4</scope>
    <scope>MUTAGENESIS OF SER-458; SER-460; SER-480; SER-484; SER-488 AND SER-501</scope>
</reference>
<feature type="chain" id="PRO_0000234058" description="Rop guanine nucleotide exchange factor 1">
    <location>
        <begin position="1"/>
        <end position="548"/>
    </location>
</feature>
<feature type="domain" description="PRONE" evidence="1">
    <location>
        <begin position="81"/>
        <end position="462"/>
    </location>
</feature>
<feature type="region of interest" description="Disordered" evidence="2">
    <location>
        <begin position="1"/>
        <end position="38"/>
    </location>
</feature>
<feature type="region of interest" description="Involved in auto-inhibition">
    <location>
        <begin position="458"/>
        <end position="548"/>
    </location>
</feature>
<feature type="compositionally biased region" description="Acidic residues" evidence="2">
    <location>
        <begin position="1"/>
        <end position="12"/>
    </location>
</feature>
<feature type="compositionally biased region" description="Low complexity" evidence="2">
    <location>
        <begin position="19"/>
        <end position="36"/>
    </location>
</feature>
<feature type="modified residue" description="Phosphoserine" evidence="8">
    <location>
        <position position="460"/>
    </location>
</feature>
<feature type="modified residue" description="Phosphoserine" evidence="8">
    <location>
        <position position="480"/>
    </location>
</feature>
<feature type="mutagenesis site" description="No effect on function in polarized pollen tube growth." evidence="7">
    <original>S</original>
    <variation>A</variation>
    <location>
        <position position="458"/>
    </location>
</feature>
<feature type="mutagenesis site" description="Loss of function in polarized pollen tube growth." evidence="7">
    <original>S</original>
    <variation>A</variation>
    <location>
        <position position="460"/>
    </location>
</feature>
<feature type="mutagenesis site" description="Loss of function in polarized pollen tube growth." evidence="7">
    <original>S</original>
    <variation>A</variation>
    <location>
        <position position="480"/>
    </location>
</feature>
<feature type="mutagenesis site" description="No effect on function in polarized pollen tube growth." evidence="7">
    <original>S</original>
    <variation>A</variation>
    <location>
        <position position="484"/>
    </location>
</feature>
<feature type="mutagenesis site" description="No effect on function in polarized pollen tube growth." evidence="7">
    <original>S</original>
    <variation>A</variation>
    <location>
        <position position="488"/>
    </location>
</feature>
<feature type="mutagenesis site" description="No effect on function in polarized pollen tube growth." evidence="7">
    <original>S</original>
    <variation>A</variation>
    <location>
        <position position="501"/>
    </location>
</feature>
<feature type="sequence conflict" description="In Ref. 3; AAL07042." evidence="8" ref="3">
    <original>D</original>
    <variation>G</variation>
    <location>
        <position position="548"/>
    </location>
</feature>
<comment type="function">
    <text evidence="3 4 6 7">Guanine-nucleotide exchange factor (GEF) that acts as an activator of Rop (Rho of plants) GTPases by promoting the exchange of GDP for GTP. Acts downstream of PRK2 in the control of polarized pollen tube growth by activating ARAC11/ROP1. In association with ROPGEF4, acts as a specific regulator of ARAC10/ROP11 function in ABA-mediated stomatal closure. May play a role in the Rac/Rop-signaling pathway that controls ROS-mediated root hair development.</text>
</comment>
<comment type="activity regulation">
    <text evidence="7">Phosphorylation at Ser-460 and Ser-480 by PRK2 releases ROPGEF1 auto-inhibition, thereby activating ROPGEF1, which in turn activates ARAC11/ROP1.</text>
</comment>
<comment type="subunit">
    <text evidence="4 5 6 7">Interacts with ARAC10/ROP11 and FER. Forms a complex with ARAC11/ROP1 and PRK2 (PubMed:23024212). Interacts in vitro (via PRONE domain) with PRK1, PRK2, PRK3 and PRK4 (PubMed:23024212). The C-terminal region is also important for the interaction with PRK2 (PubMed:23024212).</text>
</comment>
<comment type="interaction">
    <interactant intactId="EBI-4425188">
        <id>Q93ZY2</id>
    </interactant>
    <interactant intactId="EBI-782526">
        <id>P49597</id>
        <label>ABI1</label>
    </interactant>
    <organismsDiffer>false</organismsDiffer>
    <experiments>4</experiments>
</comment>
<comment type="interaction">
    <interactant intactId="EBI-4425188">
        <id>Q93ZY2</id>
    </interactant>
    <interactant intactId="EBI-2363348">
        <id>Q9FLI3</id>
        <label>AHG1</label>
    </interactant>
    <organismsDiffer>false</organismsDiffer>
    <experiments>2</experiments>
</comment>
<comment type="interaction">
    <interactant intactId="EBI-4425188">
        <id>Q93ZY2</id>
    </interactant>
    <interactant intactId="EBI-1548072">
        <id>O82481</id>
        <label>ARAC10</label>
    </interactant>
    <organismsDiffer>false</organismsDiffer>
    <experiments>5</experiments>
</comment>
<comment type="interaction">
    <interactant intactId="EBI-4425188">
        <id>Q93ZY2</id>
    </interactant>
    <interactant intactId="EBI-15880405">
        <id>Q9SCZ4</id>
        <label>FER</label>
    </interactant>
    <organismsDiffer>false</organismsDiffer>
    <experiments>4</experiments>
</comment>
<comment type="interaction">
    <interactant intactId="EBI-4425188">
        <id>Q93ZY2</id>
    </interactant>
    <interactant intactId="EBI-16206717">
        <id>Q9M811</id>
        <label>ROPGEF11</label>
    </interactant>
    <organismsDiffer>false</organismsDiffer>
    <experiments>3</experiments>
</comment>
<comment type="interaction">
    <interactant intactId="EBI-4425188">
        <id>Q93ZY2</id>
    </interactant>
    <interactant intactId="EBI-2363373">
        <id>Q9FIF5</id>
        <label>SAG113</label>
    </interactant>
    <organismsDiffer>false</organismsDiffer>
    <experiments>2</experiments>
</comment>
<comment type="subcellular location">
    <subcellularLocation>
        <location>Cytoplasm</location>
        <location>Cytosol</location>
    </subcellularLocation>
    <subcellularLocation>
        <location evidence="4">Cell membrane</location>
    </subcellularLocation>
    <text evidence="4">Localizes to the apical region of the pollen tube plasma membrane to activate ARAC11/ROP1 and interacts with ARAC10/ROP11 on plasma membrane in guard cells.</text>
</comment>
<comment type="tissue specificity">
    <text evidence="4 6">Expressed in roots, cotyledons, leaves, stems, sepals, petals, anthers, pollen grains, stigmas and siliques.</text>
</comment>
<comment type="domain">
    <text evidence="3 4">The PRONE (plant-specific Rop nucleotide exchanger) domain is responsible for the GEF activity. The intrinsic dissociation of ROP4-GDP is stimulated 15-fold by the PRONE domain (PubMed:15980860), whereas that of ROP1-GDP is increased 350-fold (PubMed:16415208).</text>
</comment>
<comment type="PTM">
    <text evidence="8">Phosphorylated at Ser-460 and Ser-480 by PRK2.</text>
</comment>
<comment type="disruption phenotype">
    <text evidence="6">No visible phenotype under normal growth conditions.</text>
</comment>
<comment type="miscellaneous">
    <text evidence="9">Plants overexpressing ROPGEF1 or ROPGEF4 are relatively insensitive to ABA-induced stomatal closure and become severely wilted during drought stress. A similar phenotype is observed in plants expressing a constitutively active ARAC10/ROP11 (PubMed:22500990).</text>
</comment>
<proteinExistence type="evidence at protein level"/>
<keyword id="KW-1003">Cell membrane</keyword>
<keyword id="KW-0963">Cytoplasm</keyword>
<keyword id="KW-0344">Guanine-nucleotide releasing factor</keyword>
<keyword id="KW-0472">Membrane</keyword>
<keyword id="KW-0597">Phosphoprotein</keyword>
<keyword id="KW-1185">Reference proteome</keyword>
<keyword id="KW-0346">Stress response</keyword>
<accession>Q93ZY2</accession>
<accession>Q9SVE2</accession>
<evidence type="ECO:0000255" key="1">
    <source>
        <dbReference type="PROSITE-ProRule" id="PRU00663"/>
    </source>
</evidence>
<evidence type="ECO:0000256" key="2">
    <source>
        <dbReference type="SAM" id="MobiDB-lite"/>
    </source>
</evidence>
<evidence type="ECO:0000269" key="3">
    <source>
    </source>
</evidence>
<evidence type="ECO:0000269" key="4">
    <source>
    </source>
</evidence>
<evidence type="ECO:0000269" key="5">
    <source>
    </source>
</evidence>
<evidence type="ECO:0000269" key="6">
    <source>
    </source>
</evidence>
<evidence type="ECO:0000269" key="7">
    <source>
    </source>
</evidence>
<evidence type="ECO:0000305" key="8"/>
<evidence type="ECO:0000305" key="9">
    <source>
    </source>
</evidence>
<protein>
    <recommendedName>
        <fullName>Rop guanine nucleotide exchange factor 1</fullName>
        <shortName>AtRopGEF1</shortName>
    </recommendedName>
    <alternativeName>
        <fullName>Kinase partner protein-like</fullName>
        <shortName>KPP-like</shortName>
    </alternativeName>
    <alternativeName>
        <fullName>Rho of plants guanine nucleotide exchange factor 1</fullName>
    </alternativeName>
</protein>
<sequence>MGSLSSEEDDEVSSERCGSYSPSADISESESSSSFSCHRFDGEGASSSIPSSPRVVAGRGFYFPAPVMLPVIGGKDVVWDDKQPDNDLSEIEMMKERFAKLLLGEDMSGGGKGVCTALAISNAITNLSATVFGELWRLEPLAPQKKAMWRRELEWLLCVSDSIVELIPSIQQFPGGGTYEIMETRPRSDLYANLPALKKLDAMLIDMLDAFSDTEFWYTDRGIVLGDCDKDSYNSPASVRQEDKWWLPCPKVPPNGLSEEARKKLQQCRDFANQILKAALAINSGVLAEMEIPDPYLETLPKSGKECLGEIIYQYLTANKFSPECLLDCLDLSSEHQTLEIANRIEAAVHVWRQKNGRRHKKQAKLKLSSWGGKVKGLVNDNERNDFLVQRAETLLQSLRIRFPGLPQTTLDMNKIQYNKDVGQSILESYSRVMESMAFNITARIDDVLYVDDAMRRSISVTESLSLFSINGLNPQKAFSVQSSPHGSPFATPALSVASRSPRRAPPLYSVKRNGTREKGIVGETEKAWSYAGNLSSRRVTGVTPERD</sequence>
<dbReference type="EMBL" id="AL035539">
    <property type="protein sequence ID" value="CAB37499.1"/>
    <property type="molecule type" value="Genomic_DNA"/>
</dbReference>
<dbReference type="EMBL" id="AL161593">
    <property type="protein sequence ID" value="CAB80508.1"/>
    <property type="molecule type" value="Genomic_DNA"/>
</dbReference>
<dbReference type="EMBL" id="CP002687">
    <property type="protein sequence ID" value="AEE86928.1"/>
    <property type="molecule type" value="Genomic_DNA"/>
</dbReference>
<dbReference type="EMBL" id="AY056193">
    <property type="protein sequence ID" value="AAL07042.1"/>
    <property type="molecule type" value="mRNA"/>
</dbReference>
<dbReference type="EMBL" id="AY056375">
    <property type="protein sequence ID" value="AAL08231.1"/>
    <property type="molecule type" value="mRNA"/>
</dbReference>
<dbReference type="EMBL" id="AY133649">
    <property type="protein sequence ID" value="AAM91479.1"/>
    <property type="molecule type" value="mRNA"/>
</dbReference>
<dbReference type="EMBL" id="BT000462">
    <property type="protein sequence ID" value="AAN17439.1"/>
    <property type="molecule type" value="mRNA"/>
</dbReference>
<dbReference type="EMBL" id="BT000975">
    <property type="protein sequence ID" value="AAN41375.1"/>
    <property type="molecule type" value="mRNA"/>
</dbReference>
<dbReference type="EMBL" id="AY084995">
    <property type="protein sequence ID" value="AAM61554.1"/>
    <property type="molecule type" value="mRNA"/>
</dbReference>
<dbReference type="PIR" id="T05671">
    <property type="entry name" value="T05671"/>
</dbReference>
<dbReference type="RefSeq" id="NP_195556.1">
    <property type="nucleotide sequence ID" value="NM_120005.4"/>
</dbReference>
<dbReference type="SMR" id="Q93ZY2"/>
<dbReference type="BioGRID" id="15280">
    <property type="interactions" value="8"/>
</dbReference>
<dbReference type="DIP" id="DIP-59393N"/>
<dbReference type="FunCoup" id="Q93ZY2">
    <property type="interactions" value="1859"/>
</dbReference>
<dbReference type="IntAct" id="Q93ZY2">
    <property type="interactions" value="15"/>
</dbReference>
<dbReference type="MINT" id="Q93ZY2"/>
<dbReference type="STRING" id="3702.Q93ZY2"/>
<dbReference type="GlyGen" id="Q93ZY2">
    <property type="glycosylation" value="1 site"/>
</dbReference>
<dbReference type="iPTMnet" id="Q93ZY2"/>
<dbReference type="PaxDb" id="3702-AT4G38430.1"/>
<dbReference type="ProteomicsDB" id="228187"/>
<dbReference type="EnsemblPlants" id="AT4G38430.1">
    <property type="protein sequence ID" value="AT4G38430.1"/>
    <property type="gene ID" value="AT4G38430"/>
</dbReference>
<dbReference type="GeneID" id="830000"/>
<dbReference type="Gramene" id="AT4G38430.1">
    <property type="protein sequence ID" value="AT4G38430.1"/>
    <property type="gene ID" value="AT4G38430"/>
</dbReference>
<dbReference type="KEGG" id="ath:AT4G38430"/>
<dbReference type="Araport" id="AT4G38430"/>
<dbReference type="TAIR" id="AT4G38430">
    <property type="gene designation" value="ROPGEF1"/>
</dbReference>
<dbReference type="eggNOG" id="ENOG502QPIY">
    <property type="taxonomic scope" value="Eukaryota"/>
</dbReference>
<dbReference type="HOGENOM" id="CLU_019073_2_1_1"/>
<dbReference type="InParanoid" id="Q93ZY2"/>
<dbReference type="OMA" id="IPRAYME"/>
<dbReference type="OrthoDB" id="1053009at2759"/>
<dbReference type="PhylomeDB" id="Q93ZY2"/>
<dbReference type="PRO" id="PR:Q93ZY2"/>
<dbReference type="Proteomes" id="UP000006548">
    <property type="component" value="Chromosome 4"/>
</dbReference>
<dbReference type="ExpressionAtlas" id="Q93ZY2">
    <property type="expression patterns" value="baseline and differential"/>
</dbReference>
<dbReference type="GO" id="GO:0016324">
    <property type="term" value="C:apical plasma membrane"/>
    <property type="evidence" value="ECO:0000314"/>
    <property type="project" value="TAIR"/>
</dbReference>
<dbReference type="GO" id="GO:0005829">
    <property type="term" value="C:cytosol"/>
    <property type="evidence" value="ECO:0007669"/>
    <property type="project" value="UniProtKB-SubCell"/>
</dbReference>
<dbReference type="GO" id="GO:0005886">
    <property type="term" value="C:plasma membrane"/>
    <property type="evidence" value="ECO:0000314"/>
    <property type="project" value="TAIR"/>
</dbReference>
<dbReference type="GO" id="GO:0005085">
    <property type="term" value="F:guanyl-nucleotide exchange factor activity"/>
    <property type="evidence" value="ECO:0000314"/>
    <property type="project" value="TAIR"/>
</dbReference>
<dbReference type="GO" id="GO:0009860">
    <property type="term" value="P:pollen tube growth"/>
    <property type="evidence" value="ECO:0000315"/>
    <property type="project" value="TAIR"/>
</dbReference>
<dbReference type="GO" id="GO:2001108">
    <property type="term" value="P:positive regulation of Rho guanyl-nucleotide exchange factor activity"/>
    <property type="evidence" value="ECO:0000315"/>
    <property type="project" value="TAIR"/>
</dbReference>
<dbReference type="GO" id="GO:2000012">
    <property type="term" value="P:regulation of auxin polar transport"/>
    <property type="evidence" value="ECO:0000315"/>
    <property type="project" value="TAIR"/>
</dbReference>
<dbReference type="GO" id="GO:0080092">
    <property type="term" value="P:regulation of pollen tube growth"/>
    <property type="evidence" value="ECO:0000316"/>
    <property type="project" value="TAIR"/>
</dbReference>
<dbReference type="FunFam" id="1.20.58.2010:FF:000004">
    <property type="entry name" value="Rop guanine nucleotide exchange factor 1"/>
    <property type="match status" value="1"/>
</dbReference>
<dbReference type="FunFam" id="1.20.58.2010:FF:000001">
    <property type="entry name" value="Rop guanine nucleotide exchange factor 14"/>
    <property type="match status" value="1"/>
</dbReference>
<dbReference type="Gene3D" id="1.20.58.2010">
    <property type="entry name" value="PRONE domain, subdomain 1"/>
    <property type="match status" value="2"/>
</dbReference>
<dbReference type="InterPro" id="IPR005512">
    <property type="entry name" value="PRONE_dom"/>
</dbReference>
<dbReference type="InterPro" id="IPR038937">
    <property type="entry name" value="RopGEF"/>
</dbReference>
<dbReference type="PANTHER" id="PTHR33101">
    <property type="entry name" value="ROP GUANINE NUCLEOTIDE EXCHANGE FACTOR 1"/>
    <property type="match status" value="1"/>
</dbReference>
<dbReference type="PANTHER" id="PTHR33101:SF6">
    <property type="entry name" value="ROP GUANINE NUCLEOTIDE EXCHANGE FACTOR 1"/>
    <property type="match status" value="1"/>
</dbReference>
<dbReference type="Pfam" id="PF03759">
    <property type="entry name" value="PRONE"/>
    <property type="match status" value="1"/>
</dbReference>
<dbReference type="PROSITE" id="PS51334">
    <property type="entry name" value="PRONE"/>
    <property type="match status" value="1"/>
</dbReference>